<accession>P65566</accession>
<accession>A0A1R3Y3Y8</accession>
<accession>P95171</accession>
<accession>X2BN81</accession>
<evidence type="ECO:0000255" key="1">
    <source>
        <dbReference type="HAMAP-Rule" id="MF_01456"/>
    </source>
</evidence>
<reference key="1">
    <citation type="journal article" date="2003" name="Proc. Natl. Acad. Sci. U.S.A.">
        <title>The complete genome sequence of Mycobacterium bovis.</title>
        <authorList>
            <person name="Garnier T."/>
            <person name="Eiglmeier K."/>
            <person name="Camus J.-C."/>
            <person name="Medina N."/>
            <person name="Mansoor H."/>
            <person name="Pryor M."/>
            <person name="Duthoy S."/>
            <person name="Grondin S."/>
            <person name="Lacroix C."/>
            <person name="Monsempe C."/>
            <person name="Simon S."/>
            <person name="Harris B."/>
            <person name="Atkin R."/>
            <person name="Doggett J."/>
            <person name="Mayes R."/>
            <person name="Keating L."/>
            <person name="Wheeler P.R."/>
            <person name="Parkhill J."/>
            <person name="Barrell B.G."/>
            <person name="Cole S.T."/>
            <person name="Gordon S.V."/>
            <person name="Hewinson R.G."/>
        </authorList>
    </citation>
    <scope>NUCLEOTIDE SEQUENCE [LARGE SCALE GENOMIC DNA]</scope>
    <source>
        <strain>ATCC BAA-935 / AF2122/97</strain>
    </source>
</reference>
<reference key="2">
    <citation type="journal article" date="2017" name="Genome Announc.">
        <title>Updated reference genome sequence and annotation of Mycobacterium bovis AF2122/97.</title>
        <authorList>
            <person name="Malone K.M."/>
            <person name="Farrell D."/>
            <person name="Stuber T.P."/>
            <person name="Schubert O.T."/>
            <person name="Aebersold R."/>
            <person name="Robbe-Austerman S."/>
            <person name="Gordon S.V."/>
        </authorList>
    </citation>
    <scope>NUCLEOTIDE SEQUENCE [LARGE SCALE GENOMIC DNA]</scope>
    <scope>GENOME REANNOTATION</scope>
    <source>
        <strain>ATCC BAA-935 / AF2122/97</strain>
    </source>
</reference>
<feature type="chain" id="PRO_0000118531" description="NADH-quinone oxidoreductase subunit K">
    <location>
        <begin position="1"/>
        <end position="99"/>
    </location>
</feature>
<feature type="transmembrane region" description="Helical" evidence="1">
    <location>
        <begin position="3"/>
        <end position="23"/>
    </location>
</feature>
<feature type="transmembrane region" description="Helical" evidence="1">
    <location>
        <begin position="28"/>
        <end position="48"/>
    </location>
</feature>
<feature type="transmembrane region" description="Helical" evidence="1">
    <location>
        <begin position="59"/>
        <end position="79"/>
    </location>
</feature>
<organism>
    <name type="scientific">Mycobacterium bovis (strain ATCC BAA-935 / AF2122/97)</name>
    <dbReference type="NCBI Taxonomy" id="233413"/>
    <lineage>
        <taxon>Bacteria</taxon>
        <taxon>Bacillati</taxon>
        <taxon>Actinomycetota</taxon>
        <taxon>Actinomycetes</taxon>
        <taxon>Mycobacteriales</taxon>
        <taxon>Mycobacteriaceae</taxon>
        <taxon>Mycobacterium</taxon>
        <taxon>Mycobacterium tuberculosis complex</taxon>
    </lineage>
</organism>
<protein>
    <recommendedName>
        <fullName evidence="1">NADH-quinone oxidoreductase subunit K</fullName>
        <ecNumber evidence="1">7.1.1.-</ecNumber>
    </recommendedName>
    <alternativeName>
        <fullName evidence="1">NADH dehydrogenase I subunit K</fullName>
    </alternativeName>
    <alternativeName>
        <fullName evidence="1">NDH-1 subunit K</fullName>
    </alternativeName>
</protein>
<proteinExistence type="inferred from homology"/>
<keyword id="KW-1003">Cell membrane</keyword>
<keyword id="KW-0472">Membrane</keyword>
<keyword id="KW-0520">NAD</keyword>
<keyword id="KW-0874">Quinone</keyword>
<keyword id="KW-1185">Reference proteome</keyword>
<keyword id="KW-1278">Translocase</keyword>
<keyword id="KW-0812">Transmembrane</keyword>
<keyword id="KW-1133">Transmembrane helix</keyword>
<keyword id="KW-0813">Transport</keyword>
<comment type="function">
    <text evidence="1">NDH-1 shuttles electrons from NADH, via FMN and iron-sulfur (Fe-S) centers, to quinones in the respiratory chain. The immediate electron acceptor for the enzyme in this species is believed to be a menaquinone. Couples the redox reaction to proton translocation (for every two electrons transferred, four hydrogen ions are translocated across the cytoplasmic membrane), and thus conserves the redox energy in a proton gradient.</text>
</comment>
<comment type="catalytic activity">
    <reaction evidence="1">
        <text>a quinone + NADH + 5 H(+)(in) = a quinol + NAD(+) + 4 H(+)(out)</text>
        <dbReference type="Rhea" id="RHEA:57888"/>
        <dbReference type="ChEBI" id="CHEBI:15378"/>
        <dbReference type="ChEBI" id="CHEBI:24646"/>
        <dbReference type="ChEBI" id="CHEBI:57540"/>
        <dbReference type="ChEBI" id="CHEBI:57945"/>
        <dbReference type="ChEBI" id="CHEBI:132124"/>
    </reaction>
</comment>
<comment type="subunit">
    <text evidence="1">NDH-1 is composed of 14 different subunits. Subunits NuoA, H, J, K, L, M, N constitute the membrane sector of the complex.</text>
</comment>
<comment type="subcellular location">
    <subcellularLocation>
        <location>Cell membrane</location>
        <topology>Multi-pass membrane protein</topology>
    </subcellularLocation>
</comment>
<comment type="similarity">
    <text evidence="1">Belongs to the complex I subunit 4L family.</text>
</comment>
<dbReference type="EC" id="7.1.1.-" evidence="1"/>
<dbReference type="EMBL" id="LT708304">
    <property type="protein sequence ID" value="SIU01806.1"/>
    <property type="molecule type" value="Genomic_DNA"/>
</dbReference>
<dbReference type="RefSeq" id="NP_856824.1">
    <property type="nucleotide sequence ID" value="NC_002945.3"/>
</dbReference>
<dbReference type="RefSeq" id="WP_003416452.1">
    <property type="nucleotide sequence ID" value="NC_002945.4"/>
</dbReference>
<dbReference type="SMR" id="P65566"/>
<dbReference type="GeneID" id="45427142"/>
<dbReference type="KEGG" id="mbo:BQ2027_MB3179"/>
<dbReference type="PATRIC" id="fig|233413.5.peg.3497"/>
<dbReference type="Proteomes" id="UP000001419">
    <property type="component" value="Chromosome"/>
</dbReference>
<dbReference type="GO" id="GO:0030964">
    <property type="term" value="C:NADH dehydrogenase complex"/>
    <property type="evidence" value="ECO:0007669"/>
    <property type="project" value="TreeGrafter"/>
</dbReference>
<dbReference type="GO" id="GO:0005886">
    <property type="term" value="C:plasma membrane"/>
    <property type="evidence" value="ECO:0007669"/>
    <property type="project" value="UniProtKB-SubCell"/>
</dbReference>
<dbReference type="GO" id="GO:0050136">
    <property type="term" value="F:NADH:ubiquinone reductase (non-electrogenic) activity"/>
    <property type="evidence" value="ECO:0007669"/>
    <property type="project" value="UniProtKB-UniRule"/>
</dbReference>
<dbReference type="GO" id="GO:0048038">
    <property type="term" value="F:quinone binding"/>
    <property type="evidence" value="ECO:0007669"/>
    <property type="project" value="UniProtKB-KW"/>
</dbReference>
<dbReference type="GO" id="GO:0042773">
    <property type="term" value="P:ATP synthesis coupled electron transport"/>
    <property type="evidence" value="ECO:0007669"/>
    <property type="project" value="InterPro"/>
</dbReference>
<dbReference type="FunFam" id="1.10.287.3510:FF:000001">
    <property type="entry name" value="NADH-quinone oxidoreductase subunit K"/>
    <property type="match status" value="1"/>
</dbReference>
<dbReference type="Gene3D" id="1.10.287.3510">
    <property type="match status" value="1"/>
</dbReference>
<dbReference type="HAMAP" id="MF_01456">
    <property type="entry name" value="NDH1_NuoK"/>
    <property type="match status" value="1"/>
</dbReference>
<dbReference type="InterPro" id="IPR001133">
    <property type="entry name" value="NADH_UbQ_OxRdtase_chain4L/K"/>
</dbReference>
<dbReference type="InterPro" id="IPR039428">
    <property type="entry name" value="NUOK/Mnh_C1-like"/>
</dbReference>
<dbReference type="NCBIfam" id="NF004320">
    <property type="entry name" value="PRK05715.1-2"/>
    <property type="match status" value="1"/>
</dbReference>
<dbReference type="PANTHER" id="PTHR11434:SF21">
    <property type="entry name" value="NADH DEHYDROGENASE SUBUNIT 4L-RELATED"/>
    <property type="match status" value="1"/>
</dbReference>
<dbReference type="PANTHER" id="PTHR11434">
    <property type="entry name" value="NADH-UBIQUINONE OXIDOREDUCTASE SUBUNIT ND4L"/>
    <property type="match status" value="1"/>
</dbReference>
<dbReference type="Pfam" id="PF00420">
    <property type="entry name" value="Oxidored_q2"/>
    <property type="match status" value="1"/>
</dbReference>
<sequence length="99" mass="10858">MNPANYLYLSVLLFTIGASGVLLRRNAIVMFMCVELMLNAVNLAFVTFARMHGHLDAQMIAFFTMVVAACEVVVGLAIIMTIFRTRKSASVDDANLLKG</sequence>
<name>NUOK_MYCBO</name>
<gene>
    <name evidence="1" type="primary">nuoK</name>
    <name type="ordered locus">BQ2027_MB3179</name>
</gene>